<organism>
    <name type="scientific">Drosophila willistoni</name>
    <name type="common">Fruit fly</name>
    <dbReference type="NCBI Taxonomy" id="7260"/>
    <lineage>
        <taxon>Eukaryota</taxon>
        <taxon>Metazoa</taxon>
        <taxon>Ecdysozoa</taxon>
        <taxon>Arthropoda</taxon>
        <taxon>Hexapoda</taxon>
        <taxon>Insecta</taxon>
        <taxon>Pterygota</taxon>
        <taxon>Neoptera</taxon>
        <taxon>Endopterygota</taxon>
        <taxon>Diptera</taxon>
        <taxon>Brachycera</taxon>
        <taxon>Muscomorpha</taxon>
        <taxon>Ephydroidea</taxon>
        <taxon>Drosophilidae</taxon>
        <taxon>Drosophila</taxon>
        <taxon>Sophophora</taxon>
    </lineage>
</organism>
<feature type="chain" id="PRO_0000378970" description="Lateral signaling target protein 2 homolog">
    <location>
        <begin position="1"/>
        <end position="993"/>
    </location>
</feature>
<feature type="zinc finger region" description="FYVE-type" evidence="2">
    <location>
        <begin position="905"/>
        <end position="965"/>
    </location>
</feature>
<feature type="region of interest" description="Disordered" evidence="3">
    <location>
        <begin position="340"/>
        <end position="449"/>
    </location>
</feature>
<feature type="region of interest" description="Disordered" evidence="3">
    <location>
        <begin position="494"/>
        <end position="623"/>
    </location>
</feature>
<feature type="region of interest" description="Disordered" evidence="3">
    <location>
        <begin position="759"/>
        <end position="813"/>
    </location>
</feature>
<feature type="region of interest" description="Disordered" evidence="3">
    <location>
        <begin position="825"/>
        <end position="902"/>
    </location>
</feature>
<feature type="region of interest" description="Disordered" evidence="3">
    <location>
        <begin position="968"/>
        <end position="993"/>
    </location>
</feature>
<feature type="compositionally biased region" description="Low complexity" evidence="3">
    <location>
        <begin position="343"/>
        <end position="360"/>
    </location>
</feature>
<feature type="compositionally biased region" description="Polar residues" evidence="3">
    <location>
        <begin position="372"/>
        <end position="405"/>
    </location>
</feature>
<feature type="compositionally biased region" description="Acidic residues" evidence="3">
    <location>
        <begin position="409"/>
        <end position="448"/>
    </location>
</feature>
<feature type="compositionally biased region" description="Polar residues" evidence="3">
    <location>
        <begin position="535"/>
        <end position="549"/>
    </location>
</feature>
<feature type="compositionally biased region" description="Basic residues" evidence="3">
    <location>
        <begin position="559"/>
        <end position="608"/>
    </location>
</feature>
<feature type="compositionally biased region" description="Low complexity" evidence="3">
    <location>
        <begin position="759"/>
        <end position="801"/>
    </location>
</feature>
<feature type="compositionally biased region" description="Low complexity" evidence="3">
    <location>
        <begin position="842"/>
        <end position="862"/>
    </location>
</feature>
<feature type="compositionally biased region" description="Low complexity" evidence="3">
    <location>
        <begin position="884"/>
        <end position="896"/>
    </location>
</feature>
<feature type="compositionally biased region" description="Polar residues" evidence="3">
    <location>
        <begin position="978"/>
        <end position="993"/>
    </location>
</feature>
<feature type="binding site" evidence="2">
    <location>
        <position position="911"/>
    </location>
    <ligand>
        <name>Zn(2+)</name>
        <dbReference type="ChEBI" id="CHEBI:29105"/>
        <label>1</label>
    </ligand>
</feature>
<feature type="binding site" evidence="2">
    <location>
        <position position="914"/>
    </location>
    <ligand>
        <name>Zn(2+)</name>
        <dbReference type="ChEBI" id="CHEBI:29105"/>
        <label>1</label>
    </ligand>
</feature>
<feature type="binding site" evidence="2">
    <location>
        <position position="927"/>
    </location>
    <ligand>
        <name>Zn(2+)</name>
        <dbReference type="ChEBI" id="CHEBI:29105"/>
        <label>2</label>
    </ligand>
</feature>
<feature type="binding site" evidence="2">
    <location>
        <position position="930"/>
    </location>
    <ligand>
        <name>Zn(2+)</name>
        <dbReference type="ChEBI" id="CHEBI:29105"/>
        <label>2</label>
    </ligand>
</feature>
<feature type="binding site" evidence="2">
    <location>
        <position position="935"/>
    </location>
    <ligand>
        <name>Zn(2+)</name>
        <dbReference type="ChEBI" id="CHEBI:29105"/>
        <label>1</label>
    </ligand>
</feature>
<feature type="binding site" evidence="2">
    <location>
        <position position="938"/>
    </location>
    <ligand>
        <name>Zn(2+)</name>
        <dbReference type="ChEBI" id="CHEBI:29105"/>
        <label>1</label>
    </ligand>
</feature>
<feature type="binding site" evidence="2">
    <location>
        <position position="957"/>
    </location>
    <ligand>
        <name>Zn(2+)</name>
        <dbReference type="ChEBI" id="CHEBI:29105"/>
        <label>2</label>
    </ligand>
</feature>
<feature type="binding site" evidence="2">
    <location>
        <position position="960"/>
    </location>
    <ligand>
        <name>Zn(2+)</name>
        <dbReference type="ChEBI" id="CHEBI:29105"/>
        <label>2</label>
    </ligand>
</feature>
<feature type="modified residue" description="Phosphoserine" evidence="1">
    <location>
        <position position="525"/>
    </location>
</feature>
<feature type="modified residue" description="Phosphoserine" evidence="1">
    <location>
        <position position="526"/>
    </location>
</feature>
<feature type="modified residue" description="Phosphoserine" evidence="1">
    <location>
        <position position="808"/>
    </location>
</feature>
<keyword id="KW-0479">Metal-binding</keyword>
<keyword id="KW-0597">Phosphoprotein</keyword>
<keyword id="KW-1185">Reference proteome</keyword>
<keyword id="KW-0862">Zinc</keyword>
<keyword id="KW-0863">Zinc-finger</keyword>
<reference key="1">
    <citation type="journal article" date="2007" name="Nature">
        <title>Evolution of genes and genomes on the Drosophila phylogeny.</title>
        <authorList>
            <consortium name="Drosophila 12 genomes consortium"/>
        </authorList>
    </citation>
    <scope>NUCLEOTIDE SEQUENCE [LARGE SCALE GENOMIC DNA]</scope>
    <source>
        <strain>Tucson 14030-0811.24</strain>
    </source>
</reference>
<comment type="function">
    <text evidence="1">Negative regulator of epidermal growth factor receptor (EGFR) signaling.</text>
</comment>
<comment type="similarity">
    <text evidence="4">Belongs to the lst-2 family.</text>
</comment>
<proteinExistence type="inferred from homology"/>
<protein>
    <recommendedName>
        <fullName>Lateral signaling target protein 2 homolog</fullName>
    </recommendedName>
</protein>
<gene>
    <name type="ORF">GK22512</name>
</gene>
<sequence length="993" mass="108641">MCDDGAVCAATAAANADDKSLLARFYHADRSLTAVASELDSFDGRAEPDRCSRLVSRLRQNQDKVLAITNLIMEELLGEDRDPRAFRAKFPEEVLQENLAGQLWFGAECLAAGSSILNRETESKEMRPLAQAVTKSLGNVRVLLRDQCLRNNVPNSKTLHLDFNDCTTEQLYESLKIFDRLFAEFELSYVSAMVQVKSRHEYEMQQWIGVLFSETLQRALKMGLLDQEMVDAFDPGLMFSIPRLAIVAGLVVYNKGPLNMDMPGDQLSEMFRPFRTILIKIRDLLRNLNQQELYQLEKLLCTNEDINTKAPLGSSSIEAPSQQDYSTANTHRTLERLTVDQRNNNNNINNNSSSSSNSNSGAPSVQEDANHRSPSMLSLSTASPTPSHSIGSTFSAATSSTNPPVNWSDGDDADDDDDGDDDDEDDDDDVDDDLVGNDDSDDDDDDTTDEHLLDDIVAADCASGYLIPNTNLGNLLQPQQVTLTDNFVASDDDDGYGQVAAGAGNDEEPSTSAATRHMQRLHLPSSDSYGDADGSHNNTTTIKSPDSDGQQQHQQHTSSRQRHSHHHHRHHHHHHRHSSHSSHSHHHQHQQHHSQPHPHRTTRSGRKRCSLESPTDVDVTVVQPEPEPELVSASADNSTASSLSDDISLAMRNTTARLKFKSTENLLHRLFVCIAGVADQLQTNFASDLRQILRSVFLMNVSSSQEEIDDIPEKTKESELFEFRASENDVIQESAGSNQSIYSAEEVNPELDNVFSASGARHSAGASMQRNHTTIDNNNSTSSSPPDATITTTTTTTTTRSHVTRSRSLGDQEVVASAAAAAAAAVNEEREMQRQRNNSVGSNTPSSASSSATSSSSEQNSPVSMRSGTGRRRHQSNNETQMPTTATTTTTTGTGTLAPPAWIPDGKAPRCMSCQTPFTAFRRRHHCRNCGGVFCGVCSNASAPLPKYGLTKAVRVCRDCYAREIRSSGGGGGGVVQMQRQQAANRPQTASAS</sequence>
<dbReference type="EMBL" id="CH964251">
    <property type="protein sequence ID" value="EDW83064.1"/>
    <property type="molecule type" value="Genomic_DNA"/>
</dbReference>
<dbReference type="SMR" id="B4NFJ7"/>
<dbReference type="EnsemblMetazoa" id="FBtr0420570">
    <property type="protein sequence ID" value="FBpp0378686"/>
    <property type="gene ID" value="FBgn0224489"/>
</dbReference>
<dbReference type="EnsemblMetazoa" id="XM_002072042.4">
    <property type="protein sequence ID" value="XP_002072078.2"/>
    <property type="gene ID" value="LOC6649397"/>
</dbReference>
<dbReference type="GeneID" id="6649397"/>
<dbReference type="KEGG" id="dwi:6649397"/>
<dbReference type="eggNOG" id="KOG1819">
    <property type="taxonomic scope" value="Eukaryota"/>
</dbReference>
<dbReference type="HOGENOM" id="CLU_007360_1_0_1"/>
<dbReference type="OMA" id="CYVREVQ"/>
<dbReference type="OrthoDB" id="20035at2759"/>
<dbReference type="PhylomeDB" id="B4NFJ7"/>
<dbReference type="Proteomes" id="UP000007798">
    <property type="component" value="Unassembled WGS sequence"/>
</dbReference>
<dbReference type="GO" id="GO:0031901">
    <property type="term" value="C:early endosome membrane"/>
    <property type="evidence" value="ECO:0007669"/>
    <property type="project" value="TreeGrafter"/>
</dbReference>
<dbReference type="GO" id="GO:0008270">
    <property type="term" value="F:zinc ion binding"/>
    <property type="evidence" value="ECO:0007669"/>
    <property type="project" value="UniProtKB-KW"/>
</dbReference>
<dbReference type="CDD" id="cd15731">
    <property type="entry name" value="FYVE_LST2"/>
    <property type="match status" value="1"/>
</dbReference>
<dbReference type="FunFam" id="3.30.40.10:FF:000073">
    <property type="entry name" value="myotubularin-related protein 4 isoform X2"/>
    <property type="match status" value="1"/>
</dbReference>
<dbReference type="Gene3D" id="3.30.40.10">
    <property type="entry name" value="Zinc/RING finger domain, C3HC4 (zinc finger)"/>
    <property type="match status" value="1"/>
</dbReference>
<dbReference type="InterPro" id="IPR043269">
    <property type="entry name" value="FYVE_LST2"/>
</dbReference>
<dbReference type="InterPro" id="IPR051118">
    <property type="entry name" value="LST-2"/>
</dbReference>
<dbReference type="InterPro" id="IPR000306">
    <property type="entry name" value="Znf_FYVE"/>
</dbReference>
<dbReference type="InterPro" id="IPR017455">
    <property type="entry name" value="Znf_FYVE-rel"/>
</dbReference>
<dbReference type="InterPro" id="IPR011011">
    <property type="entry name" value="Znf_FYVE_PHD"/>
</dbReference>
<dbReference type="InterPro" id="IPR013083">
    <property type="entry name" value="Znf_RING/FYVE/PHD"/>
</dbReference>
<dbReference type="PANTHER" id="PTHR46465">
    <property type="entry name" value="LATERAL SIGNALING TARGET PROTEIN 2 HOMOLOG"/>
    <property type="match status" value="1"/>
</dbReference>
<dbReference type="PANTHER" id="PTHR46465:SF2">
    <property type="entry name" value="LATERAL SIGNALING TARGET PROTEIN 2 HOMOLOG"/>
    <property type="match status" value="1"/>
</dbReference>
<dbReference type="Pfam" id="PF01363">
    <property type="entry name" value="FYVE"/>
    <property type="match status" value="1"/>
</dbReference>
<dbReference type="SMART" id="SM00064">
    <property type="entry name" value="FYVE"/>
    <property type="match status" value="1"/>
</dbReference>
<dbReference type="SUPFAM" id="SSF57903">
    <property type="entry name" value="FYVE/PHD zinc finger"/>
    <property type="match status" value="1"/>
</dbReference>
<dbReference type="PROSITE" id="PS50178">
    <property type="entry name" value="ZF_FYVE"/>
    <property type="match status" value="1"/>
</dbReference>
<accession>B4NFJ7</accession>
<evidence type="ECO:0000250" key="1"/>
<evidence type="ECO:0000255" key="2">
    <source>
        <dbReference type="PROSITE-ProRule" id="PRU00091"/>
    </source>
</evidence>
<evidence type="ECO:0000256" key="3">
    <source>
        <dbReference type="SAM" id="MobiDB-lite"/>
    </source>
</evidence>
<evidence type="ECO:0000305" key="4"/>
<name>LST2_DROWI</name>